<sequence length="545" mass="62891">MTKKLSLELRQTRKPIQTACGFCHEKHLQCDVGRPCQNCRKRNIASFCRDKVKRRRKRKRSDASNFDKDEAATQTLNFNTVNPGEGSSSAMTQDEKNTGTTTATTTRTTTNFRSESKASSSTENISRAMKDPADTIIANSLLDKPTIGDTDDTGWGFGSIWTNDEYMTLNDLTSFASESMPNQLGPIEEQRSPRRTLGEPLARRYDSSQPFQYLNFGSKLHKTDSRPYISLEQPGNVPSIPAFTMNKGSNDEDASPQQKESQQMQLWQQQASQLQQQASQLQQQASQLQQQRTQQNEPVSEWTPFQLRLLIKTPKDLFDKKNLVKPHNYRKAYKDLLECLHKMFLGSYYRRQNGRWRPVSDDEDQMRRRLMRKEQLQHIAKSIGELYMPKFVALTSNMIEEDLLLQELVLQRSLLELENMSKLVNCTPICIWRRSGEICFVSNEFCSLTGFYKREILDQRRFIVEFMDHQSVVSYYDLFHEHLAFGPKDSTRTILNKDQAVYTECNLLLNNGSYLKCACCLTARRDAFNISLLLMGQFLPIFDVQ</sequence>
<feature type="chain" id="PRO_0000406496" description="Glucose starvation modulator protein 1">
    <location>
        <begin position="1"/>
        <end position="545"/>
    </location>
</feature>
<feature type="domain" description="PAS">
    <location>
        <begin position="416"/>
        <end position="486"/>
    </location>
</feature>
<feature type="DNA-binding region" description="Zn(2)-C6 fungal-type" evidence="2">
    <location>
        <begin position="20"/>
        <end position="48"/>
    </location>
</feature>
<feature type="region of interest" description="Disordered" evidence="3">
    <location>
        <begin position="51"/>
        <end position="131"/>
    </location>
</feature>
<feature type="region of interest" description="Disordered" evidence="3">
    <location>
        <begin position="228"/>
        <end position="270"/>
    </location>
</feature>
<feature type="compositionally biased region" description="Basic residues" evidence="3">
    <location>
        <begin position="51"/>
        <end position="60"/>
    </location>
</feature>
<feature type="compositionally biased region" description="Basic and acidic residues" evidence="3">
    <location>
        <begin position="61"/>
        <end position="71"/>
    </location>
</feature>
<feature type="compositionally biased region" description="Polar residues" evidence="3">
    <location>
        <begin position="72"/>
        <end position="92"/>
    </location>
</feature>
<feature type="compositionally biased region" description="Low complexity" evidence="3">
    <location>
        <begin position="98"/>
        <end position="110"/>
    </location>
</feature>
<feature type="compositionally biased region" description="Polar residues" evidence="3">
    <location>
        <begin position="111"/>
        <end position="125"/>
    </location>
</feature>
<feature type="compositionally biased region" description="Low complexity" evidence="3">
    <location>
        <begin position="257"/>
        <end position="270"/>
    </location>
</feature>
<dbReference type="EMBL" id="CU928178">
    <property type="protein sequence ID" value="CAR28342.1"/>
    <property type="molecule type" value="Genomic_DNA"/>
</dbReference>
<dbReference type="RefSeq" id="XP_002497275.1">
    <property type="nucleotide sequence ID" value="XM_002497230.1"/>
</dbReference>
<dbReference type="FunCoup" id="C5DX31">
    <property type="interactions" value="180"/>
</dbReference>
<dbReference type="GeneID" id="8205030"/>
<dbReference type="KEGG" id="zro:ZYRO0F01804g"/>
<dbReference type="HOGENOM" id="CLU_010748_2_2_1"/>
<dbReference type="InParanoid" id="C5DX31"/>
<dbReference type="Proteomes" id="UP000008536">
    <property type="component" value="Chromosome F"/>
</dbReference>
<dbReference type="GO" id="GO:0005634">
    <property type="term" value="C:nucleus"/>
    <property type="evidence" value="ECO:0007669"/>
    <property type="project" value="UniProtKB-SubCell"/>
</dbReference>
<dbReference type="GO" id="GO:0000981">
    <property type="term" value="F:DNA-binding transcription factor activity, RNA polymerase II-specific"/>
    <property type="evidence" value="ECO:0007669"/>
    <property type="project" value="InterPro"/>
</dbReference>
<dbReference type="GO" id="GO:0000977">
    <property type="term" value="F:RNA polymerase II transcription regulatory region sequence-specific DNA binding"/>
    <property type="evidence" value="ECO:0007669"/>
    <property type="project" value="TreeGrafter"/>
</dbReference>
<dbReference type="GO" id="GO:0008270">
    <property type="term" value="F:zinc ion binding"/>
    <property type="evidence" value="ECO:0007669"/>
    <property type="project" value="InterPro"/>
</dbReference>
<dbReference type="GO" id="GO:0009267">
    <property type="term" value="P:cellular response to starvation"/>
    <property type="evidence" value="ECO:0007669"/>
    <property type="project" value="TreeGrafter"/>
</dbReference>
<dbReference type="CDD" id="cd00067">
    <property type="entry name" value="GAL4"/>
    <property type="match status" value="1"/>
</dbReference>
<dbReference type="CDD" id="cd00130">
    <property type="entry name" value="PAS"/>
    <property type="match status" value="1"/>
</dbReference>
<dbReference type="Gene3D" id="4.10.240.10">
    <property type="entry name" value="Zn(2)-C6 fungal-type DNA-binding domain"/>
    <property type="match status" value="1"/>
</dbReference>
<dbReference type="InterPro" id="IPR050335">
    <property type="entry name" value="ERT1_acuK_gluconeogen_tf"/>
</dbReference>
<dbReference type="InterPro" id="IPR000014">
    <property type="entry name" value="PAS"/>
</dbReference>
<dbReference type="InterPro" id="IPR035965">
    <property type="entry name" value="PAS-like_dom_sf"/>
</dbReference>
<dbReference type="InterPro" id="IPR056751">
    <property type="entry name" value="PAS_13"/>
</dbReference>
<dbReference type="InterPro" id="IPR036864">
    <property type="entry name" value="Zn2-C6_fun-type_DNA-bd_sf"/>
</dbReference>
<dbReference type="InterPro" id="IPR001138">
    <property type="entry name" value="Zn2Cys6_DnaBD"/>
</dbReference>
<dbReference type="PANTHER" id="PTHR47659:SF8">
    <property type="entry name" value="GLUCOSE STARVATION MODULATOR PROTEIN 1"/>
    <property type="match status" value="1"/>
</dbReference>
<dbReference type="PANTHER" id="PTHR47659">
    <property type="entry name" value="ZN(II)2CYS6 TRANSCRIPTION FACTOR (EUROFUNG)-RELATED"/>
    <property type="match status" value="1"/>
</dbReference>
<dbReference type="Pfam" id="PF24990">
    <property type="entry name" value="PAS_13"/>
    <property type="match status" value="1"/>
</dbReference>
<dbReference type="Pfam" id="PF00172">
    <property type="entry name" value="Zn_clus"/>
    <property type="match status" value="1"/>
</dbReference>
<dbReference type="SMART" id="SM00066">
    <property type="entry name" value="GAL4"/>
    <property type="match status" value="1"/>
</dbReference>
<dbReference type="SUPFAM" id="SSF55785">
    <property type="entry name" value="PYP-like sensor domain (PAS domain)"/>
    <property type="match status" value="1"/>
</dbReference>
<dbReference type="SUPFAM" id="SSF57701">
    <property type="entry name" value="Zn2/Cys6 DNA-binding domain"/>
    <property type="match status" value="1"/>
</dbReference>
<dbReference type="PROSITE" id="PS00463">
    <property type="entry name" value="ZN2_CY6_FUNGAL_1"/>
    <property type="match status" value="1"/>
</dbReference>
<dbReference type="PROSITE" id="PS50048">
    <property type="entry name" value="ZN2_CY6_FUNGAL_2"/>
    <property type="match status" value="1"/>
</dbReference>
<keyword id="KW-0238">DNA-binding</keyword>
<keyword id="KW-0479">Metal-binding</keyword>
<keyword id="KW-0539">Nucleus</keyword>
<keyword id="KW-1185">Reference proteome</keyword>
<keyword id="KW-0804">Transcription</keyword>
<keyword id="KW-0805">Transcription regulation</keyword>
<keyword id="KW-0862">Zinc</keyword>
<protein>
    <recommendedName>
        <fullName>Glucose starvation modulator protein 1</fullName>
    </recommendedName>
</protein>
<accession>C5DX31</accession>
<comment type="function">
    <text evidence="1">Transcription factor which regulates nonfermentable carbon utilization.</text>
</comment>
<comment type="subcellular location">
    <subcellularLocation>
        <location evidence="2">Nucleus</location>
    </subcellularLocation>
</comment>
<comment type="similarity">
    <text evidence="4">Belongs to the ERT1/acuK family.</text>
</comment>
<gene>
    <name type="primary">GSM1</name>
    <name type="ordered locus">ZYRO0F01804g</name>
</gene>
<proteinExistence type="inferred from homology"/>
<evidence type="ECO:0000250" key="1"/>
<evidence type="ECO:0000255" key="2">
    <source>
        <dbReference type="PROSITE-ProRule" id="PRU00227"/>
    </source>
</evidence>
<evidence type="ECO:0000256" key="3">
    <source>
        <dbReference type="SAM" id="MobiDB-lite"/>
    </source>
</evidence>
<evidence type="ECO:0000305" key="4"/>
<name>GSM1_ZYGRC</name>
<reference key="1">
    <citation type="journal article" date="2009" name="Genome Res.">
        <title>Comparative genomics of protoploid Saccharomycetaceae.</title>
        <authorList>
            <consortium name="The Genolevures Consortium"/>
            <person name="Souciet J.-L."/>
            <person name="Dujon B."/>
            <person name="Gaillardin C."/>
            <person name="Johnston M."/>
            <person name="Baret P.V."/>
            <person name="Cliften P."/>
            <person name="Sherman D.J."/>
            <person name="Weissenbach J."/>
            <person name="Westhof E."/>
            <person name="Wincker P."/>
            <person name="Jubin C."/>
            <person name="Poulain J."/>
            <person name="Barbe V."/>
            <person name="Segurens B."/>
            <person name="Artiguenave F."/>
            <person name="Anthouard V."/>
            <person name="Vacherie B."/>
            <person name="Val M.-E."/>
            <person name="Fulton R.S."/>
            <person name="Minx P."/>
            <person name="Wilson R."/>
            <person name="Durrens P."/>
            <person name="Jean G."/>
            <person name="Marck C."/>
            <person name="Martin T."/>
            <person name="Nikolski M."/>
            <person name="Rolland T."/>
            <person name="Seret M.-L."/>
            <person name="Casaregola S."/>
            <person name="Despons L."/>
            <person name="Fairhead C."/>
            <person name="Fischer G."/>
            <person name="Lafontaine I."/>
            <person name="Leh V."/>
            <person name="Lemaire M."/>
            <person name="de Montigny J."/>
            <person name="Neuveglise C."/>
            <person name="Thierry A."/>
            <person name="Blanc-Lenfle I."/>
            <person name="Bleykasten C."/>
            <person name="Diffels J."/>
            <person name="Fritsch E."/>
            <person name="Frangeul L."/>
            <person name="Goeffon A."/>
            <person name="Jauniaux N."/>
            <person name="Kachouri-Lafond R."/>
            <person name="Payen C."/>
            <person name="Potier S."/>
            <person name="Pribylova L."/>
            <person name="Ozanne C."/>
            <person name="Richard G.-F."/>
            <person name="Sacerdot C."/>
            <person name="Straub M.-L."/>
            <person name="Talla E."/>
        </authorList>
    </citation>
    <scope>NUCLEOTIDE SEQUENCE [LARGE SCALE GENOMIC DNA]</scope>
    <source>
        <strain>ATCC 2623 / CBS 732 / BCRC 21506 / NBRC 1130 / NCYC 568 / NRRL Y-229</strain>
    </source>
</reference>
<organism>
    <name type="scientific">Zygosaccharomyces rouxii (strain ATCC 2623 / CBS 732 / NBRC 1130 / NCYC 568 / NRRL Y-229)</name>
    <dbReference type="NCBI Taxonomy" id="559307"/>
    <lineage>
        <taxon>Eukaryota</taxon>
        <taxon>Fungi</taxon>
        <taxon>Dikarya</taxon>
        <taxon>Ascomycota</taxon>
        <taxon>Saccharomycotina</taxon>
        <taxon>Saccharomycetes</taxon>
        <taxon>Saccharomycetales</taxon>
        <taxon>Saccharomycetaceae</taxon>
        <taxon>Zygosaccharomyces</taxon>
    </lineage>
</organism>